<keyword id="KW-0285">Flavoprotein</keyword>
<keyword id="KW-0288">FMN</keyword>
<keyword id="KW-0560">Oxidoreductase</keyword>
<keyword id="KW-0664">Pyridoxine biosynthesis</keyword>
<name>PDXH_PSEP7</name>
<evidence type="ECO:0000255" key="1">
    <source>
        <dbReference type="HAMAP-Rule" id="MF_01629"/>
    </source>
</evidence>
<sequence>MTQSLADMRREYTRDGLSEANAPSDPFSLFRQWFDDAVKTERLPVEPNAMTLATVDADGHPHCRILLLKGLDERGFTFFTNYESAKGRQLAANPRAAMTFFWPALERQVRIEGEIEKVTAQESDAYYQVRPLGSRLGAWASPQSRVIADRAELERLLAETERRFADQAPSCPEHWGGYRLLPQRIEFWQGRPSRLHDRLDYRHQDGVWARERLAP</sequence>
<organism>
    <name type="scientific">Pseudomonas paraeruginosa (strain DSM 24068 / PA7)</name>
    <name type="common">Pseudomonas aeruginosa (strain PA7)</name>
    <dbReference type="NCBI Taxonomy" id="381754"/>
    <lineage>
        <taxon>Bacteria</taxon>
        <taxon>Pseudomonadati</taxon>
        <taxon>Pseudomonadota</taxon>
        <taxon>Gammaproteobacteria</taxon>
        <taxon>Pseudomonadales</taxon>
        <taxon>Pseudomonadaceae</taxon>
        <taxon>Pseudomonas</taxon>
        <taxon>Pseudomonas paraeruginosa</taxon>
    </lineage>
</organism>
<accession>A6V9E9</accession>
<reference key="1">
    <citation type="submission" date="2007-06" db="EMBL/GenBank/DDBJ databases">
        <authorList>
            <person name="Dodson R.J."/>
            <person name="Harkins D."/>
            <person name="Paulsen I.T."/>
        </authorList>
    </citation>
    <scope>NUCLEOTIDE SEQUENCE [LARGE SCALE GENOMIC DNA]</scope>
    <source>
        <strain>DSM 24068 / PA7</strain>
    </source>
</reference>
<comment type="function">
    <text evidence="1">Catalyzes the oxidation of either pyridoxine 5'-phosphate (PNP) or pyridoxamine 5'-phosphate (PMP) into pyridoxal 5'-phosphate (PLP).</text>
</comment>
<comment type="catalytic activity">
    <reaction evidence="1">
        <text>pyridoxamine 5'-phosphate + O2 + H2O = pyridoxal 5'-phosphate + H2O2 + NH4(+)</text>
        <dbReference type="Rhea" id="RHEA:15817"/>
        <dbReference type="ChEBI" id="CHEBI:15377"/>
        <dbReference type="ChEBI" id="CHEBI:15379"/>
        <dbReference type="ChEBI" id="CHEBI:16240"/>
        <dbReference type="ChEBI" id="CHEBI:28938"/>
        <dbReference type="ChEBI" id="CHEBI:58451"/>
        <dbReference type="ChEBI" id="CHEBI:597326"/>
        <dbReference type="EC" id="1.4.3.5"/>
    </reaction>
</comment>
<comment type="catalytic activity">
    <reaction evidence="1">
        <text>pyridoxine 5'-phosphate + O2 = pyridoxal 5'-phosphate + H2O2</text>
        <dbReference type="Rhea" id="RHEA:15149"/>
        <dbReference type="ChEBI" id="CHEBI:15379"/>
        <dbReference type="ChEBI" id="CHEBI:16240"/>
        <dbReference type="ChEBI" id="CHEBI:58589"/>
        <dbReference type="ChEBI" id="CHEBI:597326"/>
        <dbReference type="EC" id="1.4.3.5"/>
    </reaction>
</comment>
<comment type="cofactor">
    <cofactor evidence="1">
        <name>FMN</name>
        <dbReference type="ChEBI" id="CHEBI:58210"/>
    </cofactor>
    <text evidence="1">Binds 1 FMN per subunit.</text>
</comment>
<comment type="pathway">
    <text evidence="1">Cofactor metabolism; pyridoxal 5'-phosphate salvage; pyridoxal 5'-phosphate from pyridoxamine 5'-phosphate: step 1/1.</text>
</comment>
<comment type="pathway">
    <text evidence="1">Cofactor metabolism; pyridoxal 5'-phosphate salvage; pyridoxal 5'-phosphate from pyridoxine 5'-phosphate: step 1/1.</text>
</comment>
<comment type="subunit">
    <text evidence="1">Homodimer.</text>
</comment>
<comment type="similarity">
    <text evidence="1">Belongs to the pyridoxamine 5'-phosphate oxidase family.</text>
</comment>
<feature type="chain" id="PRO_1000069697" description="Pyridoxine/pyridoxamine 5'-phosphate oxidase">
    <location>
        <begin position="1"/>
        <end position="215"/>
    </location>
</feature>
<feature type="binding site" evidence="1">
    <location>
        <begin position="9"/>
        <end position="12"/>
    </location>
    <ligand>
        <name>substrate</name>
    </ligand>
</feature>
<feature type="binding site" evidence="1">
    <location>
        <begin position="64"/>
        <end position="69"/>
    </location>
    <ligand>
        <name>FMN</name>
        <dbReference type="ChEBI" id="CHEBI:58210"/>
    </ligand>
</feature>
<feature type="binding site" evidence="1">
    <location>
        <position position="69"/>
    </location>
    <ligand>
        <name>substrate</name>
    </ligand>
</feature>
<feature type="binding site" evidence="1">
    <location>
        <begin position="79"/>
        <end position="80"/>
    </location>
    <ligand>
        <name>FMN</name>
        <dbReference type="ChEBI" id="CHEBI:58210"/>
    </ligand>
</feature>
<feature type="binding site" evidence="1">
    <location>
        <position position="86"/>
    </location>
    <ligand>
        <name>FMN</name>
        <dbReference type="ChEBI" id="CHEBI:58210"/>
    </ligand>
</feature>
<feature type="binding site" evidence="1">
    <location>
        <position position="108"/>
    </location>
    <ligand>
        <name>FMN</name>
        <dbReference type="ChEBI" id="CHEBI:58210"/>
    </ligand>
</feature>
<feature type="binding site" evidence="1">
    <location>
        <position position="126"/>
    </location>
    <ligand>
        <name>substrate</name>
    </ligand>
</feature>
<feature type="binding site" evidence="1">
    <location>
        <position position="130"/>
    </location>
    <ligand>
        <name>substrate</name>
    </ligand>
</feature>
<feature type="binding site" evidence="1">
    <location>
        <position position="134"/>
    </location>
    <ligand>
        <name>substrate</name>
    </ligand>
</feature>
<feature type="binding site" evidence="1">
    <location>
        <begin position="143"/>
        <end position="144"/>
    </location>
    <ligand>
        <name>FMN</name>
        <dbReference type="ChEBI" id="CHEBI:58210"/>
    </ligand>
</feature>
<feature type="binding site" evidence="1">
    <location>
        <position position="188"/>
    </location>
    <ligand>
        <name>FMN</name>
        <dbReference type="ChEBI" id="CHEBI:58210"/>
    </ligand>
</feature>
<feature type="binding site" evidence="1">
    <location>
        <begin position="194"/>
        <end position="196"/>
    </location>
    <ligand>
        <name>substrate</name>
    </ligand>
</feature>
<feature type="binding site" evidence="1">
    <location>
        <position position="198"/>
    </location>
    <ligand>
        <name>FMN</name>
        <dbReference type="ChEBI" id="CHEBI:58210"/>
    </ligand>
</feature>
<dbReference type="EC" id="1.4.3.5" evidence="1"/>
<dbReference type="EMBL" id="CP000744">
    <property type="protein sequence ID" value="ABR84483.1"/>
    <property type="molecule type" value="Genomic_DNA"/>
</dbReference>
<dbReference type="RefSeq" id="WP_003153441.1">
    <property type="nucleotide sequence ID" value="NC_009656.1"/>
</dbReference>
<dbReference type="SMR" id="A6V9E9"/>
<dbReference type="GeneID" id="77222349"/>
<dbReference type="KEGG" id="pap:PSPA7_4331"/>
<dbReference type="HOGENOM" id="CLU_032263_2_2_6"/>
<dbReference type="UniPathway" id="UPA01068">
    <property type="reaction ID" value="UER00304"/>
</dbReference>
<dbReference type="UniPathway" id="UPA01068">
    <property type="reaction ID" value="UER00305"/>
</dbReference>
<dbReference type="Proteomes" id="UP000001582">
    <property type="component" value="Chromosome"/>
</dbReference>
<dbReference type="GO" id="GO:0010181">
    <property type="term" value="F:FMN binding"/>
    <property type="evidence" value="ECO:0007669"/>
    <property type="project" value="UniProtKB-UniRule"/>
</dbReference>
<dbReference type="GO" id="GO:0004733">
    <property type="term" value="F:pyridoxamine phosphate oxidase activity"/>
    <property type="evidence" value="ECO:0007669"/>
    <property type="project" value="UniProtKB-UniRule"/>
</dbReference>
<dbReference type="GO" id="GO:0008615">
    <property type="term" value="P:pyridoxine biosynthetic process"/>
    <property type="evidence" value="ECO:0007669"/>
    <property type="project" value="UniProtKB-KW"/>
</dbReference>
<dbReference type="FunFam" id="2.30.110.10:FF:000011">
    <property type="entry name" value="Chromosome 7, whole genome shotgun sequence"/>
    <property type="match status" value="1"/>
</dbReference>
<dbReference type="Gene3D" id="2.30.110.10">
    <property type="entry name" value="Electron Transport, Fmn-binding Protein, Chain A"/>
    <property type="match status" value="1"/>
</dbReference>
<dbReference type="HAMAP" id="MF_01629">
    <property type="entry name" value="PdxH"/>
    <property type="match status" value="1"/>
</dbReference>
<dbReference type="InterPro" id="IPR000659">
    <property type="entry name" value="Pyridox_Oxase"/>
</dbReference>
<dbReference type="InterPro" id="IPR019740">
    <property type="entry name" value="Pyridox_Oxase_CS"/>
</dbReference>
<dbReference type="InterPro" id="IPR011576">
    <property type="entry name" value="Pyridox_Oxase_N"/>
</dbReference>
<dbReference type="InterPro" id="IPR019576">
    <property type="entry name" value="Pyridoxamine_oxidase_dimer_C"/>
</dbReference>
<dbReference type="InterPro" id="IPR012349">
    <property type="entry name" value="Split_barrel_FMN-bd"/>
</dbReference>
<dbReference type="NCBIfam" id="TIGR00558">
    <property type="entry name" value="pdxH"/>
    <property type="match status" value="1"/>
</dbReference>
<dbReference type="NCBIfam" id="NF004231">
    <property type="entry name" value="PRK05679.1"/>
    <property type="match status" value="1"/>
</dbReference>
<dbReference type="PANTHER" id="PTHR10851:SF0">
    <property type="entry name" value="PYRIDOXINE-5'-PHOSPHATE OXIDASE"/>
    <property type="match status" value="1"/>
</dbReference>
<dbReference type="PANTHER" id="PTHR10851">
    <property type="entry name" value="PYRIDOXINE-5-PHOSPHATE OXIDASE"/>
    <property type="match status" value="1"/>
</dbReference>
<dbReference type="Pfam" id="PF10590">
    <property type="entry name" value="PNP_phzG_C"/>
    <property type="match status" value="1"/>
</dbReference>
<dbReference type="Pfam" id="PF01243">
    <property type="entry name" value="PNPOx_N"/>
    <property type="match status" value="1"/>
</dbReference>
<dbReference type="PIRSF" id="PIRSF000190">
    <property type="entry name" value="Pyd_amn-ph_oxd"/>
    <property type="match status" value="1"/>
</dbReference>
<dbReference type="SUPFAM" id="SSF50475">
    <property type="entry name" value="FMN-binding split barrel"/>
    <property type="match status" value="1"/>
</dbReference>
<dbReference type="PROSITE" id="PS01064">
    <property type="entry name" value="PYRIDOX_OXIDASE"/>
    <property type="match status" value="1"/>
</dbReference>
<gene>
    <name evidence="1" type="primary">pdxH</name>
    <name type="ordered locus">PSPA7_4331</name>
</gene>
<protein>
    <recommendedName>
        <fullName evidence="1">Pyridoxine/pyridoxamine 5'-phosphate oxidase</fullName>
        <ecNumber evidence="1">1.4.3.5</ecNumber>
    </recommendedName>
    <alternativeName>
        <fullName evidence="1">PNP/PMP oxidase</fullName>
        <shortName evidence="1">PNPOx</shortName>
    </alternativeName>
    <alternativeName>
        <fullName evidence="1">Pyridoxal 5'-phosphate synthase</fullName>
    </alternativeName>
</protein>
<proteinExistence type="inferred from homology"/>